<comment type="function">
    <text>Antagonist of the C1 repressor or repressor bypass function.</text>
</comment>
<accession>P19655</accession>
<accession>Q6LBS4</accession>
<protein>
    <recommendedName>
        <fullName>Antirepressor protein 1</fullName>
        <shortName>ant1</shortName>
    </recommendedName>
    <alternativeName>
        <fullName>Repressor bypass protein B</fullName>
        <shortName>rebB</shortName>
    </alternativeName>
    <component>
        <recommendedName>
            <fullName>Antirepressor protein 2</fullName>
            <shortName>ant2</shortName>
        </recommendedName>
        <alternativeName>
            <fullName>Repressor bypass protein A</fullName>
            <shortName>rebA</shortName>
        </alternativeName>
    </component>
</protein>
<proteinExistence type="predicted"/>
<reference key="1">
    <citation type="journal article" date="1989" name="J. Mol. Biol.">
        <title>Structure and regulation of the lytic replicon of phage P1.</title>
        <authorList>
            <person name="Hansen E.B."/>
        </authorList>
    </citation>
    <scope>NUCLEOTIDE SEQUENCE [GENOMIC DNA]</scope>
</reference>
<dbReference type="EMBL" id="X15639">
    <property type="protein sequence ID" value="CAA33659.1"/>
    <property type="molecule type" value="Genomic_DNA"/>
</dbReference>
<dbReference type="EMBL" id="X15639">
    <property type="protein sequence ID" value="CAA33660.1"/>
    <property type="molecule type" value="Genomic_DNA"/>
</dbReference>
<dbReference type="PIR" id="S04261">
    <property type="entry name" value="ATBPP1"/>
</dbReference>
<dbReference type="GO" id="GO:0003677">
    <property type="term" value="F:DNA binding"/>
    <property type="evidence" value="ECO:0007669"/>
    <property type="project" value="UniProtKB-KW"/>
</dbReference>
<dbReference type="InterPro" id="IPR005039">
    <property type="entry name" value="Ant_C"/>
</dbReference>
<dbReference type="Pfam" id="PF03374">
    <property type="entry name" value="ANT"/>
    <property type="match status" value="1"/>
</dbReference>
<name>ANT_BPP1</name>
<keyword id="KW-0238">DNA-binding</keyword>
<gene>
    <name type="primary">ant</name>
    <name type="synonym">reb</name>
</gene>
<organismHost>
    <name type="scientific">Enterobacteriaceae</name>
    <dbReference type="NCBI Taxonomy" id="543"/>
</organismHost>
<sequence>MKKPLVTRNEIAEAIALHTACMPTREIPGAIANYFMITRRFYTRTDKAVINRLLIAEIRDYLIEQGRLRYATVAAEIRKEAHRMTGNNLNVEKTAPVTSATPAPAVNIIPNTGDTIDSQTLLKMVNEARKLCGEPEVRNNKFIEKILDELEGEFYTKSAKSHGTRAGRSFEVITMTYKQALRVAARESKAVRRSLIDKLEELQQANSPAPSIPQTLPEALRLAAELAEQKMQLEQQLVAAAPKVDFADRVSVANGILIGNFAKVVGLKQNALFSWLRQNGILMAFGARKNVPRQQYINAGYFTVKEVVLDDENGYQIRLTPN</sequence>
<feature type="chain" id="PRO_0000003348" description="Antirepressor protein 1">
    <location>
        <begin position="1"/>
        <end position="322"/>
    </location>
</feature>
<feature type="chain" id="PRO_0000003349" description="Antirepressor protein 2" evidence="1">
    <location>
        <begin position="84"/>
        <end position="322"/>
    </location>
</feature>
<feature type="DNA-binding region" description="H-T-H motif" evidence="1">
    <location>
        <begin position="258"/>
        <end position="277"/>
    </location>
</feature>
<evidence type="ECO:0000255" key="1"/>
<organism>
    <name type="scientific">Escherichia phage P1</name>
    <name type="common">Bacteriophage P1</name>
    <dbReference type="NCBI Taxonomy" id="2886926"/>
    <lineage>
        <taxon>Viruses</taxon>
        <taxon>Duplodnaviria</taxon>
        <taxon>Heunggongvirae</taxon>
        <taxon>Uroviricota</taxon>
        <taxon>Caudoviricetes</taxon>
        <taxon>Punavirus</taxon>
        <taxon>Punavirus P1</taxon>
    </lineage>
</organism>